<keyword id="KW-1015">Disulfide bond</keyword>
<keyword id="KW-0325">Glycoprotein</keyword>
<keyword id="KW-0430">Lectin</keyword>
<keyword id="KW-0472">Membrane</keyword>
<keyword id="KW-1185">Reference proteome</keyword>
<keyword id="KW-0735">Signal-anchor</keyword>
<keyword id="KW-0812">Transmembrane</keyword>
<keyword id="KW-1133">Transmembrane helix</keyword>
<protein>
    <recommendedName>
        <fullName>C-type lectin domain family 1 member A</fullName>
    </recommendedName>
    <alternativeName>
        <fullName>C-type lectin-like receptor 1</fullName>
        <shortName>CLEC-1</shortName>
    </alternativeName>
</protein>
<name>CLC1A_BOVIN</name>
<reference key="1">
    <citation type="submission" date="2006-08" db="EMBL/GenBank/DDBJ databases">
        <authorList>
            <consortium name="NIH - Mammalian Gene Collection (MGC) project"/>
        </authorList>
    </citation>
    <scope>NUCLEOTIDE SEQUENCE [LARGE SCALE MRNA]</scope>
    <source>
        <strain>Hereford</strain>
        <tissue>Fetal lung</tissue>
    </source>
</reference>
<dbReference type="EMBL" id="BC120028">
    <property type="protein sequence ID" value="AAI20029.1"/>
    <property type="molecule type" value="mRNA"/>
</dbReference>
<dbReference type="RefSeq" id="NP_001069549.1">
    <property type="nucleotide sequence ID" value="NM_001076081.1"/>
</dbReference>
<dbReference type="SMR" id="Q0VCS6"/>
<dbReference type="FunCoup" id="Q0VCS6">
    <property type="interactions" value="140"/>
</dbReference>
<dbReference type="STRING" id="9913.ENSBTAP00000019328"/>
<dbReference type="GlyCosmos" id="Q0VCS6">
    <property type="glycosylation" value="2 sites, No reported glycans"/>
</dbReference>
<dbReference type="GlyGen" id="Q0VCS6">
    <property type="glycosylation" value="2 sites"/>
</dbReference>
<dbReference type="PaxDb" id="9913-ENSBTAP00000019328"/>
<dbReference type="Ensembl" id="ENSBTAT00000019328.6">
    <property type="protein sequence ID" value="ENSBTAP00000019328.5"/>
    <property type="gene ID" value="ENSBTAG00000030424.4"/>
</dbReference>
<dbReference type="GeneID" id="536944"/>
<dbReference type="KEGG" id="bta:536944"/>
<dbReference type="CTD" id="51267"/>
<dbReference type="VEuPathDB" id="HostDB:ENSBTAG00000030424"/>
<dbReference type="VGNC" id="VGNC:27427">
    <property type="gene designation" value="CLEC1A"/>
</dbReference>
<dbReference type="eggNOG" id="KOG4297">
    <property type="taxonomic scope" value="Eukaryota"/>
</dbReference>
<dbReference type="GeneTree" id="ENSGT00940000161945"/>
<dbReference type="HOGENOM" id="CLU_049894_8_0_1"/>
<dbReference type="InParanoid" id="Q0VCS6"/>
<dbReference type="OMA" id="GWYWEDG"/>
<dbReference type="OrthoDB" id="418245at2759"/>
<dbReference type="TreeFam" id="TF336674"/>
<dbReference type="Proteomes" id="UP000009136">
    <property type="component" value="Chromosome 5"/>
</dbReference>
<dbReference type="Bgee" id="ENSBTAG00000030424">
    <property type="expression patterns" value="Expressed in lung and 97 other cell types or tissues"/>
</dbReference>
<dbReference type="GO" id="GO:0005886">
    <property type="term" value="C:plasma membrane"/>
    <property type="evidence" value="ECO:0000318"/>
    <property type="project" value="GO_Central"/>
</dbReference>
<dbReference type="GO" id="GO:0030246">
    <property type="term" value="F:carbohydrate binding"/>
    <property type="evidence" value="ECO:0007669"/>
    <property type="project" value="UniProtKB-KW"/>
</dbReference>
<dbReference type="GO" id="GO:0004888">
    <property type="term" value="F:transmembrane signaling receptor activity"/>
    <property type="evidence" value="ECO:0000318"/>
    <property type="project" value="GO_Central"/>
</dbReference>
<dbReference type="GO" id="GO:0007165">
    <property type="term" value="P:signal transduction"/>
    <property type="evidence" value="ECO:0000318"/>
    <property type="project" value="GO_Central"/>
</dbReference>
<dbReference type="CDD" id="cd03593">
    <property type="entry name" value="CLECT_NK_receptors_like"/>
    <property type="match status" value="1"/>
</dbReference>
<dbReference type="Gene3D" id="3.10.100.10">
    <property type="entry name" value="Mannose-Binding Protein A, subunit A"/>
    <property type="match status" value="1"/>
</dbReference>
<dbReference type="InterPro" id="IPR001304">
    <property type="entry name" value="C-type_lectin-like"/>
</dbReference>
<dbReference type="InterPro" id="IPR016186">
    <property type="entry name" value="C-type_lectin-like/link_sf"/>
</dbReference>
<dbReference type="InterPro" id="IPR052309">
    <property type="entry name" value="C-type_Lectin_Domain_Fam1"/>
</dbReference>
<dbReference type="InterPro" id="IPR016187">
    <property type="entry name" value="CTDL_fold"/>
</dbReference>
<dbReference type="InterPro" id="IPR033992">
    <property type="entry name" value="NKR-like_CTLD"/>
</dbReference>
<dbReference type="PANTHER" id="PTHR46490:SF1">
    <property type="entry name" value="C-TYPE LECTIN DOMAIN FAMILY 1 MEMBER A"/>
    <property type="match status" value="1"/>
</dbReference>
<dbReference type="PANTHER" id="PTHR46490">
    <property type="entry name" value="C-TYPE LECTIN DOMAIN FAMILY 12 MEMBER A-RELATED"/>
    <property type="match status" value="1"/>
</dbReference>
<dbReference type="Pfam" id="PF00059">
    <property type="entry name" value="Lectin_C"/>
    <property type="match status" value="1"/>
</dbReference>
<dbReference type="SMART" id="SM00034">
    <property type="entry name" value="CLECT"/>
    <property type="match status" value="1"/>
</dbReference>
<dbReference type="SUPFAM" id="SSF56436">
    <property type="entry name" value="C-type lectin-like"/>
    <property type="match status" value="1"/>
</dbReference>
<dbReference type="PROSITE" id="PS50041">
    <property type="entry name" value="C_TYPE_LECTIN_2"/>
    <property type="match status" value="1"/>
</dbReference>
<proteinExistence type="evidence at transcript level"/>
<accession>Q0VCS6</accession>
<organism>
    <name type="scientific">Bos taurus</name>
    <name type="common">Bovine</name>
    <dbReference type="NCBI Taxonomy" id="9913"/>
    <lineage>
        <taxon>Eukaryota</taxon>
        <taxon>Metazoa</taxon>
        <taxon>Chordata</taxon>
        <taxon>Craniata</taxon>
        <taxon>Vertebrata</taxon>
        <taxon>Euteleostomi</taxon>
        <taxon>Mammalia</taxon>
        <taxon>Eutheria</taxon>
        <taxon>Laurasiatheria</taxon>
        <taxon>Artiodactyla</taxon>
        <taxon>Ruminantia</taxon>
        <taxon>Pecora</taxon>
        <taxon>Bovidae</taxon>
        <taxon>Bovinae</taxon>
        <taxon>Bos</taxon>
    </lineage>
</organism>
<comment type="subcellular location">
    <subcellularLocation>
        <location evidence="4">Membrane</location>
        <topology evidence="4">Single-pass type II membrane protein</topology>
    </subcellularLocation>
</comment>
<feature type="chain" id="PRO_0000313577" description="C-type lectin domain family 1 member A">
    <location>
        <begin position="1"/>
        <end position="278"/>
    </location>
</feature>
<feature type="topological domain" description="Cytoplasmic" evidence="1">
    <location>
        <begin position="1"/>
        <end position="52"/>
    </location>
</feature>
<feature type="transmembrane region" description="Helical; Signal-anchor for type II membrane protein" evidence="1">
    <location>
        <begin position="53"/>
        <end position="73"/>
    </location>
</feature>
<feature type="topological domain" description="Extracellular" evidence="1">
    <location>
        <begin position="74"/>
        <end position="278"/>
    </location>
</feature>
<feature type="domain" description="C-type lectin" evidence="2">
    <location>
        <begin position="144"/>
        <end position="258"/>
    </location>
</feature>
<feature type="region of interest" description="Disordered" evidence="3">
    <location>
        <begin position="1"/>
        <end position="42"/>
    </location>
</feature>
<feature type="compositionally biased region" description="Polar residues" evidence="3">
    <location>
        <begin position="18"/>
        <end position="32"/>
    </location>
</feature>
<feature type="glycosylation site" description="N-linked (GlcNAc...) asparagine" evidence="1">
    <location>
        <position position="95"/>
    </location>
</feature>
<feature type="glycosylation site" description="N-linked (GlcNAc...) asparagine" evidence="1">
    <location>
        <position position="169"/>
    </location>
</feature>
<feature type="disulfide bond" evidence="2">
    <location>
        <begin position="165"/>
        <end position="257"/>
    </location>
</feature>
<feature type="disulfide bond" evidence="2">
    <location>
        <begin position="236"/>
        <end position="249"/>
    </location>
</feature>
<gene>
    <name type="primary">CLEC1A</name>
    <name type="synonym">CLEC1</name>
</gene>
<evidence type="ECO:0000255" key="1"/>
<evidence type="ECO:0000255" key="2">
    <source>
        <dbReference type="PROSITE-ProRule" id="PRU00040"/>
    </source>
</evidence>
<evidence type="ECO:0000256" key="3">
    <source>
        <dbReference type="SAM" id="MobiDB-lite"/>
    </source>
</evidence>
<evidence type="ECO:0000305" key="4"/>
<sequence>MLAKYSSTRDMLDADGDTTMSLHSQASATSQRPELGHTEHQRPSSAWRPVALILLTLCLVLLIGLAALGLVFFQFYQLSNTQQDSILQKEEKLGNLSRQLQSLRTQNRKLAETLHHVAEKLCRELYNKTGEHRCSPCPEKWKWHGDKCYQFYKESKSWQGCEYFCIAENSTMLKINTQEVLEFAMPQSYSEFFYSYWTGLSRNSSGKAWLWMDGTPYSSELFDVMIDLTSLRSRDCVTILNGKAFSKDCRELRRCACEKAAAMVKVQSLHEPLSRRWR</sequence>